<protein>
    <recommendedName>
        <fullName>Nitrogen fixation protein NifU</fullName>
    </recommendedName>
</protein>
<comment type="function">
    <text evidence="3">May be involved in the formation or repair of [Fe-S] clusters present in iron-sulfur proteins.</text>
</comment>
<comment type="cofactor">
    <cofactor evidence="1">
        <name>[2Fe-2S] cluster</name>
        <dbReference type="ChEBI" id="CHEBI:190135"/>
    </cofactor>
    <text evidence="1">Binds 1 [2Fe-2S] cluster per subunit.</text>
</comment>
<comment type="similarity">
    <text evidence="3">Belongs to the NifU family.</text>
</comment>
<name>NIFU_AZOBR</name>
<feature type="chain" id="PRO_0000166166" description="Nitrogen fixation protein NifU">
    <location>
        <begin position="1"/>
        <end position="310"/>
    </location>
</feature>
<feature type="region of interest" description="Disordered" evidence="2">
    <location>
        <begin position="195"/>
        <end position="222"/>
    </location>
</feature>
<feature type="binding site" evidence="1">
    <location>
        <position position="139"/>
    </location>
    <ligand>
        <name>[2Fe-2S] cluster</name>
        <dbReference type="ChEBI" id="CHEBI:190135"/>
    </ligand>
</feature>
<feature type="binding site" evidence="1">
    <location>
        <position position="141"/>
    </location>
    <ligand>
        <name>[2Fe-2S] cluster</name>
        <dbReference type="ChEBI" id="CHEBI:190135"/>
    </ligand>
</feature>
<feature type="binding site" evidence="1">
    <location>
        <position position="174"/>
    </location>
    <ligand>
        <name>[2Fe-2S] cluster</name>
        <dbReference type="ChEBI" id="CHEBI:190135"/>
    </ligand>
</feature>
<feature type="binding site" evidence="1">
    <location>
        <position position="177"/>
    </location>
    <ligand>
        <name>[2Fe-2S] cluster</name>
        <dbReference type="ChEBI" id="CHEBI:190135"/>
    </ligand>
</feature>
<feature type="sequence conflict" description="In Ref. 1; AAA22184." evidence="3" ref="1">
    <original>N</original>
    <variation>K</variation>
    <location>
        <position position="56"/>
    </location>
</feature>
<feature type="sequence conflict" description="In Ref. 1; AAA22184." evidence="3" ref="1">
    <original>EEGE</original>
    <variation>AAGT</variation>
    <location>
        <begin position="133"/>
        <end position="136"/>
    </location>
</feature>
<feature type="sequence conflict" description="In Ref. 1; AAA22184." evidence="3" ref="1">
    <original>CFGI</original>
    <variation>DFQAF</variation>
    <location>
        <begin position="141"/>
        <end position="144"/>
    </location>
</feature>
<feature type="sequence conflict" description="In Ref. 1; AAA22184." evidence="3" ref="1">
    <original>IERA</original>
    <variation>DRRR</variation>
    <location>
        <begin position="149"/>
        <end position="152"/>
    </location>
</feature>
<feature type="sequence conflict" description="In Ref. 1; AAA22184." evidence="3" ref="1">
    <location>
        <begin position="201"/>
        <end position="202"/>
    </location>
</feature>
<feature type="sequence conflict" description="In Ref. 1; AAA22184." evidence="3" ref="1">
    <original>TPSSRWPRRPRH</original>
    <variation>IAYQAAGPKAEA</variation>
    <location>
        <begin position="212"/>
        <end position="223"/>
    </location>
</feature>
<feature type="sequence conflict" description="In Ref. 1; AAA22184." evidence="3" ref="1">
    <original>NV</original>
    <variation>TC</variation>
    <location>
        <begin position="230"/>
        <end position="231"/>
    </location>
</feature>
<feature type="sequence conflict" description="In Ref. 1; AAA22184." evidence="3" ref="1">
    <original>QK</original>
    <variation>RR</variation>
    <location>
        <begin position="235"/>
        <end position="236"/>
    </location>
</feature>
<feature type="sequence conflict" description="In Ref. 1; AAA22184." evidence="3" ref="1">
    <original>DW</original>
    <variation>EL</variation>
    <location>
        <begin position="243"/>
        <end position="244"/>
    </location>
</feature>
<feature type="sequence conflict" description="In Ref. 1; AAA22184." evidence="3" ref="1">
    <original>GT</original>
    <variation>AS</variation>
    <location>
        <begin position="281"/>
        <end position="282"/>
    </location>
</feature>
<feature type="sequence conflict" description="In Ref. 1; AAA22184." evidence="3" ref="1">
    <original>ASLLP</original>
    <variation>LSA</variation>
    <location>
        <begin position="303"/>
        <end position="307"/>
    </location>
</feature>
<dbReference type="EMBL" id="L34354">
    <property type="protein sequence ID" value="AAA22184.1"/>
    <property type="molecule type" value="Genomic_DNA"/>
</dbReference>
<dbReference type="EMBL" id="U26427">
    <property type="protein sequence ID" value="AAC46176.1"/>
    <property type="molecule type" value="Genomic_DNA"/>
</dbReference>
<dbReference type="SMR" id="Q43909"/>
<dbReference type="GO" id="GO:0051537">
    <property type="term" value="F:2 iron, 2 sulfur cluster binding"/>
    <property type="evidence" value="ECO:0007669"/>
    <property type="project" value="UniProtKB-KW"/>
</dbReference>
<dbReference type="GO" id="GO:0005506">
    <property type="term" value="F:iron ion binding"/>
    <property type="evidence" value="ECO:0007669"/>
    <property type="project" value="InterPro"/>
</dbReference>
<dbReference type="GO" id="GO:0016226">
    <property type="term" value="P:iron-sulfur cluster assembly"/>
    <property type="evidence" value="ECO:0007669"/>
    <property type="project" value="InterPro"/>
</dbReference>
<dbReference type="GO" id="GO:0009399">
    <property type="term" value="P:nitrogen fixation"/>
    <property type="evidence" value="ECO:0007669"/>
    <property type="project" value="UniProtKB-KW"/>
</dbReference>
<dbReference type="CDD" id="cd06664">
    <property type="entry name" value="IscU_like"/>
    <property type="match status" value="1"/>
</dbReference>
<dbReference type="CDD" id="cd19947">
    <property type="entry name" value="NifU_Fer2_BFD-like"/>
    <property type="match status" value="1"/>
</dbReference>
<dbReference type="Gene3D" id="3.90.1010.10">
    <property type="match status" value="1"/>
</dbReference>
<dbReference type="Gene3D" id="1.10.10.1100">
    <property type="entry name" value="BFD-like [2Fe-2S]-binding domain"/>
    <property type="match status" value="1"/>
</dbReference>
<dbReference type="Gene3D" id="3.30.300.130">
    <property type="entry name" value="Fe-S cluster assembly (FSCA)"/>
    <property type="match status" value="1"/>
</dbReference>
<dbReference type="InterPro" id="IPR007419">
    <property type="entry name" value="BFD-like_2Fe2S-bd_dom"/>
</dbReference>
<dbReference type="InterPro" id="IPR041854">
    <property type="entry name" value="BFD-like_2Fe2S-bd_dom_sf"/>
</dbReference>
<dbReference type="InterPro" id="IPR034904">
    <property type="entry name" value="FSCA_dom_sf"/>
</dbReference>
<dbReference type="InterPro" id="IPR016217">
    <property type="entry name" value="N_fixation_NifU"/>
</dbReference>
<dbReference type="InterPro" id="IPR010238">
    <property type="entry name" value="NIF_FeS_clus_asmbl_NifU"/>
</dbReference>
<dbReference type="InterPro" id="IPR001075">
    <property type="entry name" value="NIF_FeS_clus_asmbl_NifU_C"/>
</dbReference>
<dbReference type="InterPro" id="IPR002871">
    <property type="entry name" value="NIF_FeS_clus_asmbl_NifU_N"/>
</dbReference>
<dbReference type="NCBIfam" id="TIGR02000">
    <property type="entry name" value="NifU_proper"/>
    <property type="match status" value="1"/>
</dbReference>
<dbReference type="PANTHER" id="PTHR10093">
    <property type="entry name" value="IRON-SULFUR CLUSTER ASSEMBLY ENZYME NIFU HOMOLOG"/>
    <property type="match status" value="1"/>
</dbReference>
<dbReference type="Pfam" id="PF04324">
    <property type="entry name" value="Fer2_BFD"/>
    <property type="match status" value="1"/>
</dbReference>
<dbReference type="Pfam" id="PF01106">
    <property type="entry name" value="NifU"/>
    <property type="match status" value="1"/>
</dbReference>
<dbReference type="Pfam" id="PF01592">
    <property type="entry name" value="NifU_N"/>
    <property type="match status" value="1"/>
</dbReference>
<dbReference type="PIRSF" id="PIRSF000375">
    <property type="entry name" value="NifU"/>
    <property type="match status" value="1"/>
</dbReference>
<dbReference type="SUPFAM" id="SSF117916">
    <property type="entry name" value="Fe-S cluster assembly (FSCA) domain-like"/>
    <property type="match status" value="1"/>
</dbReference>
<dbReference type="SUPFAM" id="SSF82649">
    <property type="entry name" value="SufE/NifU"/>
    <property type="match status" value="1"/>
</dbReference>
<evidence type="ECO:0000250" key="1">
    <source>
        <dbReference type="UniProtKB" id="P05340"/>
    </source>
</evidence>
<evidence type="ECO:0000256" key="2">
    <source>
        <dbReference type="SAM" id="MobiDB-lite"/>
    </source>
</evidence>
<evidence type="ECO:0000305" key="3"/>
<gene>
    <name type="primary">nifU</name>
</gene>
<reference key="1">
    <citation type="submission" date="1994-07" db="EMBL/GenBank/DDBJ databases">
        <title>The nifU gene from Azospirillum brasilense.</title>
        <authorList>
            <person name="Frazzon J.S."/>
            <person name="Schrank I.S."/>
        </authorList>
    </citation>
    <scope>NUCLEOTIDE SEQUENCE [GENOMIC DNA]</scope>
</reference>
<reference key="2">
    <citation type="journal article" date="1998" name="FEMS Microbiol. Lett.">
        <title>Sequencing and complementation analysis of the nifUSV genes from Azospirillum brasilense.</title>
        <authorList>
            <person name="Frazzon J.S."/>
            <person name="Schrank I.S."/>
        </authorList>
    </citation>
    <scope>NUCLEOTIDE SEQUENCE [GENOMIC DNA]</scope>
</reference>
<accession>Q43909</accession>
<accession>P70726</accession>
<keyword id="KW-0001">2Fe-2S</keyword>
<keyword id="KW-0408">Iron</keyword>
<keyword id="KW-0411">Iron-sulfur</keyword>
<keyword id="KW-0479">Metal-binding</keyword>
<keyword id="KW-0535">Nitrogen fixation</keyword>
<organism>
    <name type="scientific">Azospirillum brasilense</name>
    <dbReference type="NCBI Taxonomy" id="192"/>
    <lineage>
        <taxon>Bacteria</taxon>
        <taxon>Pseudomonadati</taxon>
        <taxon>Pseudomonadota</taxon>
        <taxon>Alphaproteobacteria</taxon>
        <taxon>Rhodospirillales</taxon>
        <taxon>Azospirillaceae</taxon>
        <taxon>Azospirillum</taxon>
    </lineage>
</organism>
<proteinExistence type="inferred from homology"/>
<sequence length="310" mass="33201">MWNYTDKVKEHFFNPKNAGALDEADDVGEVGSITCGDALKLMMKVNPDQPGHRDANFQTFGCGSAIASLRSALTEMIIGKTVDEALGQVTNRDIAEYLGGLPPEKMDCSVMGAEALPAAIANFKGEGLVDDHEEGELVCKCFGIDAAMIERAVTVNSLTTLEEVTHYTKAGGSCQTCHEKIEEVLEAVLAKTGAVGPAQAPSPTPPARSGWTPSSRWPRRPRHAPAKLTNVQRMQKIMFAIEDWRPQIQRDGGDVELVDIDGKDIYVRLTGACSGCSQSAGTMMGVQAKLVEALGEFVRVKPASLLPVGA</sequence>